<reference key="1">
    <citation type="journal article" date="2005" name="Nucleic Acids Res.">
        <title>The genome sequence of Salmonella enterica serovar Choleraesuis, a highly invasive and resistant zoonotic pathogen.</title>
        <authorList>
            <person name="Chiu C.-H."/>
            <person name="Tang P."/>
            <person name="Chu C."/>
            <person name="Hu S."/>
            <person name="Bao Q."/>
            <person name="Yu J."/>
            <person name="Chou Y.-Y."/>
            <person name="Wang H.-S."/>
            <person name="Lee Y.-S."/>
        </authorList>
    </citation>
    <scope>NUCLEOTIDE SEQUENCE [LARGE SCALE GENOMIC DNA]</scope>
    <source>
        <strain>SC-B67</strain>
    </source>
</reference>
<comment type="function">
    <text evidence="2">GTP hydrolase that promotes the GTP-dependent binding of aminoacyl-tRNA to the A-site of ribosomes during protein biosynthesis.</text>
</comment>
<comment type="catalytic activity">
    <reaction evidence="2">
        <text>GTP + H2O = GDP + phosphate + H(+)</text>
        <dbReference type="Rhea" id="RHEA:19669"/>
        <dbReference type="ChEBI" id="CHEBI:15377"/>
        <dbReference type="ChEBI" id="CHEBI:15378"/>
        <dbReference type="ChEBI" id="CHEBI:37565"/>
        <dbReference type="ChEBI" id="CHEBI:43474"/>
        <dbReference type="ChEBI" id="CHEBI:58189"/>
        <dbReference type="EC" id="3.6.5.3"/>
    </reaction>
    <physiologicalReaction direction="left-to-right" evidence="2">
        <dbReference type="Rhea" id="RHEA:19670"/>
    </physiologicalReaction>
</comment>
<comment type="subunit">
    <text evidence="2">Monomer.</text>
</comment>
<comment type="subcellular location">
    <subcellularLocation>
        <location evidence="2">Cytoplasm</location>
    </subcellularLocation>
</comment>
<comment type="similarity">
    <text evidence="2">Belongs to the TRAFAC class translation factor GTPase superfamily. Classic translation factor GTPase family. EF-Tu/EF-1A subfamily.</text>
</comment>
<comment type="sequence caution" evidence="3">
    <conflict type="erroneous initiation">
        <sequence resource="EMBL-CDS" id="AAX67285"/>
    </conflict>
</comment>
<proteinExistence type="inferred from homology"/>
<protein>
    <recommendedName>
        <fullName evidence="2">Elongation factor Tu</fullName>
        <shortName evidence="2">EF-Tu</shortName>
        <ecNumber evidence="2">3.6.5.3</ecNumber>
    </recommendedName>
</protein>
<sequence length="394" mass="43284">MSKEKFERTKPHVNVGTIGHVDHGKTTLTAAITTVLAKTYGGAARAFDQIDNAPEEKARGITINTSHVEYDTPTRHYAHVDCPGHADYVKNMITGAAQMDGAILVVAATDGPMPQTREHILLGRQVGVPYIIVFLNKCDMVDDEELLELVEMEVRELLSQYDFPGDDTPIVRGSALKALEGDAEWEAKIIELAGFLDSYIPEPERAIDKPFLLPIEDVFSISGRGTVVTGRVERGIIKVGEEVEIVGIKETQKSTCTGVEMFRKLLDEGRAGENVGVLLRGIKREEIERGQVLAKPGTIKPHTKFESEVYILSKDEGGRHTPFFKGYRPQFYFRTTDVTGTIELPEGVEMVMPGDNIKMVVTLIHPIAMDDGLRFAIREGGRTVGAGVVAKVLG</sequence>
<accession>Q57H76</accession>
<accession>Q57J27</accession>
<organism>
    <name type="scientific">Salmonella choleraesuis (strain SC-B67)</name>
    <dbReference type="NCBI Taxonomy" id="321314"/>
    <lineage>
        <taxon>Bacteria</taxon>
        <taxon>Pseudomonadati</taxon>
        <taxon>Pseudomonadota</taxon>
        <taxon>Gammaproteobacteria</taxon>
        <taxon>Enterobacterales</taxon>
        <taxon>Enterobacteriaceae</taxon>
        <taxon>Salmonella</taxon>
    </lineage>
</organism>
<feature type="chain" id="PRO_0000337513" description="Elongation factor Tu">
    <location>
        <begin position="1"/>
        <end position="394"/>
    </location>
</feature>
<feature type="domain" description="tr-type G">
    <location>
        <begin position="10"/>
        <end position="204"/>
    </location>
</feature>
<feature type="region of interest" description="G1" evidence="1">
    <location>
        <begin position="19"/>
        <end position="26"/>
    </location>
</feature>
<feature type="region of interest" description="G2" evidence="1">
    <location>
        <begin position="60"/>
        <end position="64"/>
    </location>
</feature>
<feature type="region of interest" description="G3" evidence="1">
    <location>
        <begin position="81"/>
        <end position="84"/>
    </location>
</feature>
<feature type="region of interest" description="G4" evidence="1">
    <location>
        <begin position="136"/>
        <end position="139"/>
    </location>
</feature>
<feature type="region of interest" description="G5" evidence="1">
    <location>
        <begin position="174"/>
        <end position="176"/>
    </location>
</feature>
<feature type="binding site" evidence="2">
    <location>
        <begin position="19"/>
        <end position="26"/>
    </location>
    <ligand>
        <name>GTP</name>
        <dbReference type="ChEBI" id="CHEBI:37565"/>
    </ligand>
</feature>
<feature type="binding site" evidence="2">
    <location>
        <position position="26"/>
    </location>
    <ligand>
        <name>Mg(2+)</name>
        <dbReference type="ChEBI" id="CHEBI:18420"/>
    </ligand>
</feature>
<feature type="binding site" evidence="2">
    <location>
        <begin position="81"/>
        <end position="85"/>
    </location>
    <ligand>
        <name>GTP</name>
        <dbReference type="ChEBI" id="CHEBI:37565"/>
    </ligand>
</feature>
<feature type="binding site" evidence="2">
    <location>
        <begin position="136"/>
        <end position="139"/>
    </location>
    <ligand>
        <name>GTP</name>
        <dbReference type="ChEBI" id="CHEBI:37565"/>
    </ligand>
</feature>
<gene>
    <name evidence="2" type="primary">tuf1</name>
    <name type="synonym">tufB</name>
    <name type="ordered locus">SCH_3379</name>
</gene>
<gene>
    <name evidence="2" type="primary">tuf2</name>
    <name type="synonym">tufB</name>
    <name type="ordered locus">SCH_4030</name>
</gene>
<evidence type="ECO:0000250" key="1"/>
<evidence type="ECO:0000255" key="2">
    <source>
        <dbReference type="HAMAP-Rule" id="MF_00118"/>
    </source>
</evidence>
<evidence type="ECO:0000305" key="3"/>
<dbReference type="EC" id="3.6.5.3" evidence="2"/>
<dbReference type="EMBL" id="AE017220">
    <property type="protein sequence ID" value="AAX67285.1"/>
    <property type="status" value="ALT_INIT"/>
    <property type="molecule type" value="Genomic_DNA"/>
</dbReference>
<dbReference type="EMBL" id="AE017220">
    <property type="protein sequence ID" value="AAX67936.1"/>
    <property type="molecule type" value="Genomic_DNA"/>
</dbReference>
<dbReference type="SMR" id="Q57H76"/>
<dbReference type="KEGG" id="sec:SCH_3379"/>
<dbReference type="KEGG" id="sec:SCH_4030"/>
<dbReference type="HOGENOM" id="CLU_007265_0_2_6"/>
<dbReference type="Proteomes" id="UP000000538">
    <property type="component" value="Chromosome"/>
</dbReference>
<dbReference type="GO" id="GO:0005829">
    <property type="term" value="C:cytosol"/>
    <property type="evidence" value="ECO:0007669"/>
    <property type="project" value="TreeGrafter"/>
</dbReference>
<dbReference type="GO" id="GO:0005525">
    <property type="term" value="F:GTP binding"/>
    <property type="evidence" value="ECO:0007669"/>
    <property type="project" value="UniProtKB-UniRule"/>
</dbReference>
<dbReference type="GO" id="GO:0003924">
    <property type="term" value="F:GTPase activity"/>
    <property type="evidence" value="ECO:0007669"/>
    <property type="project" value="InterPro"/>
</dbReference>
<dbReference type="GO" id="GO:0097216">
    <property type="term" value="F:guanosine tetraphosphate binding"/>
    <property type="evidence" value="ECO:0007669"/>
    <property type="project" value="UniProtKB-ARBA"/>
</dbReference>
<dbReference type="GO" id="GO:0003746">
    <property type="term" value="F:translation elongation factor activity"/>
    <property type="evidence" value="ECO:0007669"/>
    <property type="project" value="UniProtKB-UniRule"/>
</dbReference>
<dbReference type="CDD" id="cd01884">
    <property type="entry name" value="EF_Tu"/>
    <property type="match status" value="1"/>
</dbReference>
<dbReference type="CDD" id="cd03697">
    <property type="entry name" value="EFTU_II"/>
    <property type="match status" value="1"/>
</dbReference>
<dbReference type="CDD" id="cd03707">
    <property type="entry name" value="EFTU_III"/>
    <property type="match status" value="1"/>
</dbReference>
<dbReference type="FunFam" id="2.40.30.10:FF:000001">
    <property type="entry name" value="Elongation factor Tu"/>
    <property type="match status" value="1"/>
</dbReference>
<dbReference type="FunFam" id="3.40.50.300:FF:000003">
    <property type="entry name" value="Elongation factor Tu"/>
    <property type="match status" value="1"/>
</dbReference>
<dbReference type="Gene3D" id="3.40.50.300">
    <property type="entry name" value="P-loop containing nucleotide triphosphate hydrolases"/>
    <property type="match status" value="1"/>
</dbReference>
<dbReference type="Gene3D" id="2.40.30.10">
    <property type="entry name" value="Translation factors"/>
    <property type="match status" value="2"/>
</dbReference>
<dbReference type="HAMAP" id="MF_00118_B">
    <property type="entry name" value="EF_Tu_B"/>
    <property type="match status" value="1"/>
</dbReference>
<dbReference type="InterPro" id="IPR041709">
    <property type="entry name" value="EF-Tu_GTP-bd"/>
</dbReference>
<dbReference type="InterPro" id="IPR050055">
    <property type="entry name" value="EF-Tu_GTPase"/>
</dbReference>
<dbReference type="InterPro" id="IPR004161">
    <property type="entry name" value="EFTu-like_2"/>
</dbReference>
<dbReference type="InterPro" id="IPR033720">
    <property type="entry name" value="EFTU_2"/>
</dbReference>
<dbReference type="InterPro" id="IPR031157">
    <property type="entry name" value="G_TR_CS"/>
</dbReference>
<dbReference type="InterPro" id="IPR027417">
    <property type="entry name" value="P-loop_NTPase"/>
</dbReference>
<dbReference type="InterPro" id="IPR005225">
    <property type="entry name" value="Small_GTP-bd"/>
</dbReference>
<dbReference type="InterPro" id="IPR000795">
    <property type="entry name" value="T_Tr_GTP-bd_dom"/>
</dbReference>
<dbReference type="InterPro" id="IPR009000">
    <property type="entry name" value="Transl_B-barrel_sf"/>
</dbReference>
<dbReference type="InterPro" id="IPR009001">
    <property type="entry name" value="Transl_elong_EF1A/Init_IF2_C"/>
</dbReference>
<dbReference type="InterPro" id="IPR004541">
    <property type="entry name" value="Transl_elong_EFTu/EF1A_bac/org"/>
</dbReference>
<dbReference type="InterPro" id="IPR004160">
    <property type="entry name" value="Transl_elong_EFTu/EF1A_C"/>
</dbReference>
<dbReference type="NCBIfam" id="TIGR00485">
    <property type="entry name" value="EF-Tu"/>
    <property type="match status" value="1"/>
</dbReference>
<dbReference type="NCBIfam" id="NF000766">
    <property type="entry name" value="PRK00049.1"/>
    <property type="match status" value="1"/>
</dbReference>
<dbReference type="NCBIfam" id="NF009372">
    <property type="entry name" value="PRK12735.1"/>
    <property type="match status" value="1"/>
</dbReference>
<dbReference type="NCBIfam" id="NF009373">
    <property type="entry name" value="PRK12736.1"/>
    <property type="match status" value="1"/>
</dbReference>
<dbReference type="NCBIfam" id="TIGR00231">
    <property type="entry name" value="small_GTP"/>
    <property type="match status" value="1"/>
</dbReference>
<dbReference type="PANTHER" id="PTHR43721:SF22">
    <property type="entry name" value="ELONGATION FACTOR TU, MITOCHONDRIAL"/>
    <property type="match status" value="1"/>
</dbReference>
<dbReference type="PANTHER" id="PTHR43721">
    <property type="entry name" value="ELONGATION FACTOR TU-RELATED"/>
    <property type="match status" value="1"/>
</dbReference>
<dbReference type="Pfam" id="PF00009">
    <property type="entry name" value="GTP_EFTU"/>
    <property type="match status" value="1"/>
</dbReference>
<dbReference type="Pfam" id="PF03144">
    <property type="entry name" value="GTP_EFTU_D2"/>
    <property type="match status" value="1"/>
</dbReference>
<dbReference type="Pfam" id="PF03143">
    <property type="entry name" value="GTP_EFTU_D3"/>
    <property type="match status" value="1"/>
</dbReference>
<dbReference type="PRINTS" id="PR00315">
    <property type="entry name" value="ELONGATNFCT"/>
</dbReference>
<dbReference type="SUPFAM" id="SSF50465">
    <property type="entry name" value="EF-Tu/eEF-1alpha/eIF2-gamma C-terminal domain"/>
    <property type="match status" value="1"/>
</dbReference>
<dbReference type="SUPFAM" id="SSF52540">
    <property type="entry name" value="P-loop containing nucleoside triphosphate hydrolases"/>
    <property type="match status" value="1"/>
</dbReference>
<dbReference type="SUPFAM" id="SSF50447">
    <property type="entry name" value="Translation proteins"/>
    <property type="match status" value="1"/>
</dbReference>
<dbReference type="PROSITE" id="PS00301">
    <property type="entry name" value="G_TR_1"/>
    <property type="match status" value="1"/>
</dbReference>
<dbReference type="PROSITE" id="PS51722">
    <property type="entry name" value="G_TR_2"/>
    <property type="match status" value="1"/>
</dbReference>
<keyword id="KW-0963">Cytoplasm</keyword>
<keyword id="KW-0251">Elongation factor</keyword>
<keyword id="KW-0342">GTP-binding</keyword>
<keyword id="KW-0378">Hydrolase</keyword>
<keyword id="KW-0460">Magnesium</keyword>
<keyword id="KW-0479">Metal-binding</keyword>
<keyword id="KW-0547">Nucleotide-binding</keyword>
<keyword id="KW-0648">Protein biosynthesis</keyword>
<name>EFTU_SALCH</name>